<protein>
    <recommendedName>
        <fullName>Uncharacterized protein AF_1629</fullName>
    </recommendedName>
</protein>
<proteinExistence type="predicted"/>
<reference key="1">
    <citation type="journal article" date="1997" name="Nature">
        <title>The complete genome sequence of the hyperthermophilic, sulphate-reducing archaeon Archaeoglobus fulgidus.</title>
        <authorList>
            <person name="Klenk H.-P."/>
            <person name="Clayton R.A."/>
            <person name="Tomb J.-F."/>
            <person name="White O."/>
            <person name="Nelson K.E."/>
            <person name="Ketchum K.A."/>
            <person name="Dodson R.J."/>
            <person name="Gwinn M.L."/>
            <person name="Hickey E.K."/>
            <person name="Peterson J.D."/>
            <person name="Richardson D.L."/>
            <person name="Kerlavage A.R."/>
            <person name="Graham D.E."/>
            <person name="Kyrpides N.C."/>
            <person name="Fleischmann R.D."/>
            <person name="Quackenbush J."/>
            <person name="Lee N.H."/>
            <person name="Sutton G.G."/>
            <person name="Gill S.R."/>
            <person name="Kirkness E.F."/>
            <person name="Dougherty B.A."/>
            <person name="McKenney K."/>
            <person name="Adams M.D."/>
            <person name="Loftus B.J."/>
            <person name="Peterson S.N."/>
            <person name="Reich C.I."/>
            <person name="McNeil L.K."/>
            <person name="Badger J.H."/>
            <person name="Glodek A."/>
            <person name="Zhou L."/>
            <person name="Overbeek R."/>
            <person name="Gocayne J.D."/>
            <person name="Weidman J.F."/>
            <person name="McDonald L.A."/>
            <person name="Utterback T.R."/>
            <person name="Cotton M.D."/>
            <person name="Spriggs T."/>
            <person name="Artiach P."/>
            <person name="Kaine B.P."/>
            <person name="Sykes S.M."/>
            <person name="Sadow P.W."/>
            <person name="D'Andrea K.P."/>
            <person name="Bowman C."/>
            <person name="Fujii C."/>
            <person name="Garland S.A."/>
            <person name="Mason T.M."/>
            <person name="Olsen G.J."/>
            <person name="Fraser C.M."/>
            <person name="Smith H.O."/>
            <person name="Woese C.R."/>
            <person name="Venter J.C."/>
        </authorList>
    </citation>
    <scope>NUCLEOTIDE SEQUENCE [LARGE SCALE GENOMIC DNA]</scope>
    <source>
        <strain>ATCC 49558 / DSM 4304 / JCM 9628 / NBRC 100126 / VC-16</strain>
    </source>
</reference>
<accession>O28644</accession>
<gene>
    <name type="ordered locus">AF_1629</name>
</gene>
<sequence>MTVDKKELNVAISGIGNFKTYAIVFKPNYLYSTSPSLIYEHSAVLKMQNSAIVVDSDQSTFSSEKISIYLINATFNPFSTTENVNLIFQPISYGGAIKFTGTITFECYNEQTAEWWNETLGDIYGAGNVDRDGTNVTVILNDVELSINYLIATATSSRSVRYDVDLEPKHLKPLLNDSATYQLSAGSVKDFGVLVLDEYLNPIRNKAKLASVSINPDCGSCNKYLNSNGEVWCSFTPFPPRRSCASP</sequence>
<dbReference type="EMBL" id="AE000782">
    <property type="protein sequence ID" value="AAB89626.1"/>
    <property type="molecule type" value="Genomic_DNA"/>
</dbReference>
<dbReference type="PIR" id="D69453">
    <property type="entry name" value="D69453"/>
</dbReference>
<dbReference type="RefSeq" id="WP_010879126.1">
    <property type="nucleotide sequence ID" value="NC_000917.1"/>
</dbReference>
<dbReference type="PaxDb" id="224325-AF_1629"/>
<dbReference type="EnsemblBacteria" id="AAB89626">
    <property type="protein sequence ID" value="AAB89626"/>
    <property type="gene ID" value="AF_1629"/>
</dbReference>
<dbReference type="KEGG" id="afu:AF_1629"/>
<dbReference type="eggNOG" id="arCOG02916">
    <property type="taxonomic scope" value="Archaea"/>
</dbReference>
<dbReference type="HOGENOM" id="CLU_1122572_0_0_2"/>
<dbReference type="OrthoDB" id="121941at2157"/>
<dbReference type="Proteomes" id="UP000002199">
    <property type="component" value="Chromosome"/>
</dbReference>
<feature type="chain" id="PRO_0000128039" description="Uncharacterized protein AF_1629">
    <location>
        <begin position="1"/>
        <end position="247"/>
    </location>
</feature>
<organism>
    <name type="scientific">Archaeoglobus fulgidus (strain ATCC 49558 / DSM 4304 / JCM 9628 / NBRC 100126 / VC-16)</name>
    <dbReference type="NCBI Taxonomy" id="224325"/>
    <lineage>
        <taxon>Archaea</taxon>
        <taxon>Methanobacteriati</taxon>
        <taxon>Methanobacteriota</taxon>
        <taxon>Archaeoglobi</taxon>
        <taxon>Archaeoglobales</taxon>
        <taxon>Archaeoglobaceae</taxon>
        <taxon>Archaeoglobus</taxon>
    </lineage>
</organism>
<name>Y1629_ARCFU</name>
<keyword id="KW-1185">Reference proteome</keyword>